<protein>
    <recommendedName>
        <fullName evidence="1">Large ribosomal subunit protein uL23</fullName>
    </recommendedName>
    <alternativeName>
        <fullName evidence="2">50S ribosomal protein L23</fullName>
    </alternativeName>
</protein>
<gene>
    <name evidence="1" type="primary">rplW</name>
    <name type="ordered locus">BALH_0110</name>
</gene>
<organism>
    <name type="scientific">Bacillus thuringiensis (strain Al Hakam)</name>
    <dbReference type="NCBI Taxonomy" id="412694"/>
    <lineage>
        <taxon>Bacteria</taxon>
        <taxon>Bacillati</taxon>
        <taxon>Bacillota</taxon>
        <taxon>Bacilli</taxon>
        <taxon>Bacillales</taxon>
        <taxon>Bacillaceae</taxon>
        <taxon>Bacillus</taxon>
        <taxon>Bacillus cereus group</taxon>
    </lineage>
</organism>
<proteinExistence type="inferred from homology"/>
<name>RL23_BACAH</name>
<comment type="function">
    <text evidence="1">One of the early assembly proteins it binds 23S rRNA. One of the proteins that surrounds the polypeptide exit tunnel on the outside of the ribosome. Forms the main docking site for trigger factor binding to the ribosome.</text>
</comment>
<comment type="subunit">
    <text evidence="1">Part of the 50S ribosomal subunit. Contacts protein L29, and trigger factor when it is bound to the ribosome.</text>
</comment>
<comment type="similarity">
    <text evidence="1">Belongs to the universal ribosomal protein uL23 family.</text>
</comment>
<accession>A0R8I2</accession>
<keyword id="KW-0687">Ribonucleoprotein</keyword>
<keyword id="KW-0689">Ribosomal protein</keyword>
<keyword id="KW-0694">RNA-binding</keyword>
<keyword id="KW-0699">rRNA-binding</keyword>
<evidence type="ECO:0000255" key="1">
    <source>
        <dbReference type="HAMAP-Rule" id="MF_01369"/>
    </source>
</evidence>
<evidence type="ECO:0000305" key="2"/>
<feature type="chain" id="PRO_1000068040" description="Large ribosomal subunit protein uL23">
    <location>
        <begin position="1"/>
        <end position="96"/>
    </location>
</feature>
<sequence length="96" mass="11114">MRDPRDIIKRPVITERSMEMMAEKKYTFDVDVKSNKTEVKDALEAIFGVKVEKVNIMNYKPKAKRVGRHAGFTSRRRKAIVKLTADSKEIEIFQGV</sequence>
<reference key="1">
    <citation type="journal article" date="2007" name="J. Bacteriol.">
        <title>The complete genome sequence of Bacillus thuringiensis Al Hakam.</title>
        <authorList>
            <person name="Challacombe J.F."/>
            <person name="Altherr M.R."/>
            <person name="Xie G."/>
            <person name="Bhotika S.S."/>
            <person name="Brown N."/>
            <person name="Bruce D."/>
            <person name="Campbell C.S."/>
            <person name="Campbell M.L."/>
            <person name="Chen J."/>
            <person name="Chertkov O."/>
            <person name="Cleland C."/>
            <person name="Dimitrijevic M."/>
            <person name="Doggett N.A."/>
            <person name="Fawcett J.J."/>
            <person name="Glavina T."/>
            <person name="Goodwin L.A."/>
            <person name="Green L.D."/>
            <person name="Han C.S."/>
            <person name="Hill K.K."/>
            <person name="Hitchcock P."/>
            <person name="Jackson P.J."/>
            <person name="Keim P."/>
            <person name="Kewalramani A.R."/>
            <person name="Longmire J."/>
            <person name="Lucas S."/>
            <person name="Malfatti S."/>
            <person name="Martinez D."/>
            <person name="McMurry K."/>
            <person name="Meincke L.J."/>
            <person name="Misra M."/>
            <person name="Moseman B.L."/>
            <person name="Mundt M."/>
            <person name="Munk A.C."/>
            <person name="Okinaka R.T."/>
            <person name="Parson-Quintana B."/>
            <person name="Reilly L.P."/>
            <person name="Richardson P."/>
            <person name="Robinson D.L."/>
            <person name="Saunders E."/>
            <person name="Tapia R."/>
            <person name="Tesmer J.G."/>
            <person name="Thayer N."/>
            <person name="Thompson L.S."/>
            <person name="Tice H."/>
            <person name="Ticknor L.O."/>
            <person name="Wills P.L."/>
            <person name="Gilna P."/>
            <person name="Brettin T.S."/>
        </authorList>
    </citation>
    <scope>NUCLEOTIDE SEQUENCE [LARGE SCALE GENOMIC DNA]</scope>
    <source>
        <strain>Al Hakam</strain>
    </source>
</reference>
<dbReference type="EMBL" id="CP000485">
    <property type="protein sequence ID" value="ABK83525.1"/>
    <property type="molecule type" value="Genomic_DNA"/>
</dbReference>
<dbReference type="RefSeq" id="WP_001205558.1">
    <property type="nucleotide sequence ID" value="NC_008600.1"/>
</dbReference>
<dbReference type="SMR" id="A0R8I2"/>
<dbReference type="GeneID" id="93010941"/>
<dbReference type="KEGG" id="btl:BALH_0110"/>
<dbReference type="HOGENOM" id="CLU_037562_3_2_9"/>
<dbReference type="GO" id="GO:1990904">
    <property type="term" value="C:ribonucleoprotein complex"/>
    <property type="evidence" value="ECO:0007669"/>
    <property type="project" value="UniProtKB-KW"/>
</dbReference>
<dbReference type="GO" id="GO:0005840">
    <property type="term" value="C:ribosome"/>
    <property type="evidence" value="ECO:0007669"/>
    <property type="project" value="UniProtKB-KW"/>
</dbReference>
<dbReference type="GO" id="GO:0019843">
    <property type="term" value="F:rRNA binding"/>
    <property type="evidence" value="ECO:0007669"/>
    <property type="project" value="UniProtKB-UniRule"/>
</dbReference>
<dbReference type="GO" id="GO:0003735">
    <property type="term" value="F:structural constituent of ribosome"/>
    <property type="evidence" value="ECO:0007669"/>
    <property type="project" value="InterPro"/>
</dbReference>
<dbReference type="GO" id="GO:0006412">
    <property type="term" value="P:translation"/>
    <property type="evidence" value="ECO:0007669"/>
    <property type="project" value="UniProtKB-UniRule"/>
</dbReference>
<dbReference type="FunFam" id="3.30.70.330:FF:000001">
    <property type="entry name" value="50S ribosomal protein L23"/>
    <property type="match status" value="1"/>
</dbReference>
<dbReference type="Gene3D" id="3.30.70.330">
    <property type="match status" value="1"/>
</dbReference>
<dbReference type="HAMAP" id="MF_01369_B">
    <property type="entry name" value="Ribosomal_uL23_B"/>
    <property type="match status" value="1"/>
</dbReference>
<dbReference type="InterPro" id="IPR012677">
    <property type="entry name" value="Nucleotide-bd_a/b_plait_sf"/>
</dbReference>
<dbReference type="InterPro" id="IPR013025">
    <property type="entry name" value="Ribosomal_uL23-like"/>
</dbReference>
<dbReference type="InterPro" id="IPR012678">
    <property type="entry name" value="Ribosomal_uL23/eL15/eS24_sf"/>
</dbReference>
<dbReference type="InterPro" id="IPR001014">
    <property type="entry name" value="Ribosomal_uL23_CS"/>
</dbReference>
<dbReference type="NCBIfam" id="NF004363">
    <property type="entry name" value="PRK05738.2-4"/>
    <property type="match status" value="1"/>
</dbReference>
<dbReference type="PANTHER" id="PTHR11620">
    <property type="entry name" value="60S RIBOSOMAL PROTEIN L23A"/>
    <property type="match status" value="1"/>
</dbReference>
<dbReference type="Pfam" id="PF00276">
    <property type="entry name" value="Ribosomal_L23"/>
    <property type="match status" value="1"/>
</dbReference>
<dbReference type="SUPFAM" id="SSF54189">
    <property type="entry name" value="Ribosomal proteins S24e, L23 and L15e"/>
    <property type="match status" value="1"/>
</dbReference>
<dbReference type="PROSITE" id="PS00050">
    <property type="entry name" value="RIBOSOMAL_L23"/>
    <property type="match status" value="1"/>
</dbReference>